<reference key="1">
    <citation type="journal article" date="1989" name="Proc. Natl. Acad. Sci. U.S.A.">
        <title>Complete nucleotide sequence of a molecular clone of woodchuck hepatitis virus that is infectious in the natural host.</title>
        <authorList>
            <person name="Girones R."/>
            <person name="Cote P.J."/>
            <person name="Hornbuckle W.E."/>
            <person name="Tennant B.C."/>
            <person name="Gerin J.L."/>
            <person name="Purcell R.H."/>
            <person name="Miller R.H."/>
        </authorList>
    </citation>
    <scope>NUCLEOTIDE SEQUENCE [GENOMIC DNA]</scope>
    <source>
        <strain>Infectious clone</strain>
    </source>
</reference>
<evidence type="ECO:0000255" key="1">
    <source>
        <dbReference type="HAMAP-Rule" id="MF_04076"/>
    </source>
</evidence>
<evidence type="ECO:0000256" key="2">
    <source>
        <dbReference type="SAM" id="MobiDB-lite"/>
    </source>
</evidence>
<sequence>MDIDPYKEFGSSYQLLNFLPLDFFPDLNALVDTATALYEEELTGREHCSPHHTAIRQALVCWDELTKLIAWMSSNITSEQVRTIIVNHVNDTWGLKVRQSLWFHLSCLTFGQHTVQEFLVSFGVWIRTPAPYRPPNAPILSTLPEHTVIRRRGGARASRSPRRRTPSPRRRRSQSPRRRRSQSPSANC</sequence>
<organismHost>
    <name type="scientific">Marmota monax</name>
    <name type="common">Woodchuck</name>
    <dbReference type="NCBI Taxonomy" id="9995"/>
</organismHost>
<dbReference type="EMBL" id="J04514">
    <property type="protein sequence ID" value="AAA46772.1"/>
    <property type="molecule type" value="Genomic_DNA"/>
</dbReference>
<dbReference type="PIR" id="C32397">
    <property type="entry name" value="NKVLC"/>
</dbReference>
<dbReference type="RefSeq" id="NP_671816.1">
    <property type="nucleotide sequence ID" value="NC_004107.1"/>
</dbReference>
<dbReference type="SMR" id="P69711"/>
<dbReference type="KEGG" id="vg:2546420"/>
<dbReference type="Proteomes" id="UP000000287">
    <property type="component" value="Genome"/>
</dbReference>
<dbReference type="GO" id="GO:0043657">
    <property type="term" value="C:host cell"/>
    <property type="evidence" value="ECO:0007669"/>
    <property type="project" value="GOC"/>
</dbReference>
<dbReference type="GO" id="GO:0030430">
    <property type="term" value="C:host cell cytoplasm"/>
    <property type="evidence" value="ECO:0007669"/>
    <property type="project" value="UniProtKB-SubCell"/>
</dbReference>
<dbReference type="GO" id="GO:0039619">
    <property type="term" value="C:T=4 icosahedral viral capsid"/>
    <property type="evidence" value="ECO:0007669"/>
    <property type="project" value="UniProtKB-UniRule"/>
</dbReference>
<dbReference type="GO" id="GO:0003677">
    <property type="term" value="F:DNA binding"/>
    <property type="evidence" value="ECO:0007669"/>
    <property type="project" value="UniProtKB-UniRule"/>
</dbReference>
<dbReference type="GO" id="GO:0003723">
    <property type="term" value="F:RNA binding"/>
    <property type="evidence" value="ECO:0007669"/>
    <property type="project" value="UniProtKB-UniRule"/>
</dbReference>
<dbReference type="GO" id="GO:0005198">
    <property type="term" value="F:structural molecule activity"/>
    <property type="evidence" value="ECO:0007669"/>
    <property type="project" value="UniProtKB-UniRule"/>
</dbReference>
<dbReference type="GO" id="GO:0075521">
    <property type="term" value="P:microtubule-dependent intracellular transport of viral material towards nucleus"/>
    <property type="evidence" value="ECO:0007669"/>
    <property type="project" value="UniProtKB-UniRule"/>
</dbReference>
<dbReference type="GO" id="GO:0046718">
    <property type="term" value="P:symbiont entry into host cell"/>
    <property type="evidence" value="ECO:0007669"/>
    <property type="project" value="UniProtKB-UniRule"/>
</dbReference>
<dbReference type="GO" id="GO:0075732">
    <property type="term" value="P:viral penetration into host nucleus"/>
    <property type="evidence" value="ECO:0007669"/>
    <property type="project" value="UniProtKB-UniRule"/>
</dbReference>
<dbReference type="Gene3D" id="1.10.4090.10">
    <property type="entry name" value="Viral capsid, core domain supefamily, Hepatitis B virus"/>
    <property type="match status" value="1"/>
</dbReference>
<dbReference type="HAMAP" id="MF_04076">
    <property type="entry name" value="HBV_HBEAG"/>
    <property type="match status" value="1"/>
</dbReference>
<dbReference type="InterPro" id="IPR002006">
    <property type="entry name" value="Hepatitis_core"/>
</dbReference>
<dbReference type="InterPro" id="IPR036459">
    <property type="entry name" value="Viral_capsid_core_dom_sf_HBV"/>
</dbReference>
<dbReference type="Pfam" id="PF00906">
    <property type="entry name" value="Hepatitis_core"/>
    <property type="match status" value="3"/>
</dbReference>
<dbReference type="SUPFAM" id="SSF47852">
    <property type="entry name" value="Hepatitis B viral capsid (hbcag)"/>
    <property type="match status" value="1"/>
</dbReference>
<comment type="function">
    <text evidence="1">Self assembles to form an icosahedral capsid. Most capsids appear to be large particles with an icosahedral symmetry of T=4 and consist of 240 copies of capsid protein, though a fraction forms smaller T=3 particles consisting of 180 capsid proteins. Entering capsids are transported along microtubules to the nucleus. Phosphorylation of the capsid is thought to induce exposure of nuclear localization signal in the C-terminal portion of the capsid protein that allows binding to the nuclear pore complex via the importin (karyopherin-) alpha and beta. Capsids are imported in intact form through the nuclear pore into the nuclear basket, where it probably binds NUP153. Only capsids that contain the mature viral genome can release the viral DNA and capsid protein into the nucleoplasm. Immature capsids get stuck in the basket. Capsids encapsulate the pre-genomic RNA and the P protein. Pre-genomic RNA is reverse-transcribed into DNA while the capsid is still in the cytoplasm. The capsid can then either be directed to the nucleus, providing more genomes for transcription, or bud through the endoplasmic reticulum to provide new virions.</text>
</comment>
<comment type="subunit">
    <text evidence="1">Homodimerizes, then multimerizes. Interacts with cytosol exposed regions of viral L glycoprotein present in the reticulum-to-Golgi compartment. Interacts with human FLNB. Phosphorylated form interacts with host importin alpha; this interaction depends on the exposure of the NLS, which itself depends upon genome maturation and/or phosphorylation of the capsid protein. Interacts with host NUP153.</text>
</comment>
<comment type="subcellular location">
    <subcellularLocation>
        <location evidence="1">Virion</location>
    </subcellularLocation>
    <subcellularLocation>
        <location evidence="1">Host cytoplasm</location>
    </subcellularLocation>
</comment>
<comment type="alternative products">
    <event type="alternative initiation"/>
    <isoform>
        <id>P69711-1</id>
        <name>Capsid protein</name>
        <sequence type="displayed"/>
    </isoform>
    <isoform>
        <id>P0C6J6-1</id>
        <name>External core antigen</name>
        <sequence type="external"/>
    </isoform>
</comment>
<comment type="PTM">
    <text evidence="1">Phosphorylated by host SRPK1, SRPK2, and maybe protein kinase C or GAPDH. Phosphorylation is critical for pregenomic RNA packaging. Protein kinase C phosphorylation is stimulated by HBx protein and may play a role in transport of the viral genome to the nucleus at the late step during the viral replication cycle.</text>
</comment>
<comment type="similarity">
    <text evidence="1">Belongs to the orthohepadnavirus core antigen family.</text>
</comment>
<organism>
    <name type="scientific">Woodchuck hepatitis B virus (isolate 8)</name>
    <name type="common">WHV</name>
    <dbReference type="NCBI Taxonomy" id="10433"/>
    <lineage>
        <taxon>Viruses</taxon>
        <taxon>Riboviria</taxon>
        <taxon>Pararnavirae</taxon>
        <taxon>Artverviricota</taxon>
        <taxon>Revtraviricetes</taxon>
        <taxon>Blubervirales</taxon>
        <taxon>Hepadnaviridae</taxon>
        <taxon>Orthohepadnavirus</taxon>
        <taxon>Woodchuck hepatitis virus</taxon>
    </lineage>
</organism>
<protein>
    <recommendedName>
        <fullName evidence="1">Capsid protein</fullName>
    </recommendedName>
    <alternativeName>
        <fullName evidence="1">Core antigen</fullName>
    </alternativeName>
    <alternativeName>
        <fullName evidence="1">Core protein</fullName>
    </alternativeName>
    <alternativeName>
        <fullName evidence="1">HBcAg</fullName>
    </alternativeName>
    <alternativeName>
        <fullName evidence="1">p21.5</fullName>
    </alternativeName>
</protein>
<proteinExistence type="inferred from homology"/>
<keyword id="KW-0024">Alternative initiation</keyword>
<keyword id="KW-0167">Capsid protein</keyword>
<keyword id="KW-1176">Cytoplasmic inwards viral transport</keyword>
<keyword id="KW-0238">DNA-binding</keyword>
<keyword id="KW-1035">Host cytoplasm</keyword>
<keyword id="KW-0945">Host-virus interaction</keyword>
<keyword id="KW-1177">Microtubular inwards viral transport</keyword>
<keyword id="KW-0597">Phosphoprotein</keyword>
<keyword id="KW-1185">Reference proteome</keyword>
<keyword id="KW-0677">Repeat</keyword>
<keyword id="KW-0694">RNA-binding</keyword>
<keyword id="KW-1144">T=4 icosahedral capsid protein</keyword>
<keyword id="KW-1163">Viral penetration into host nucleus</keyword>
<keyword id="KW-0946">Virion</keyword>
<keyword id="KW-1160">Virus entry into host cell</keyword>
<feature type="chain" id="PRO_0000222325" description="Capsid protein">
    <location>
        <begin position="1"/>
        <end position="188"/>
    </location>
</feature>
<feature type="repeat" description="1; half-length">
    <location>
        <begin position="160"/>
        <end position="166"/>
    </location>
</feature>
<feature type="repeat" description="2">
    <location>
        <begin position="167"/>
        <end position="174"/>
    </location>
</feature>
<feature type="repeat" description="3">
    <location>
        <begin position="175"/>
        <end position="182"/>
    </location>
</feature>
<feature type="region of interest" description="Disordered" evidence="2">
    <location>
        <begin position="150"/>
        <end position="188"/>
    </location>
</feature>
<feature type="region of interest" description="3 X 8 AA repeats of S-P-R-R-R-[PR]-S-Q">
    <location>
        <begin position="160"/>
        <end position="182"/>
    </location>
</feature>
<feature type="region of interest" description="RNA binding" evidence="1">
    <location>
        <begin position="182"/>
        <end position="188"/>
    </location>
</feature>
<feature type="short sequence motif" description="Bipartite nuclear localization signal" evidence="1">
    <location>
        <begin position="163"/>
        <end position="180"/>
    </location>
</feature>
<feature type="compositionally biased region" description="Basic residues" evidence="2">
    <location>
        <begin position="150"/>
        <end position="181"/>
    </location>
</feature>
<feature type="modified residue" description="Phosphoserine; by host" evidence="1">
    <location>
        <position position="160"/>
    </location>
</feature>
<feature type="modified residue" description="Phosphoserine; by host" evidence="1">
    <location>
        <position position="167"/>
    </location>
</feature>
<feature type="modified residue" description="Phosphoserine; by host" evidence="1">
    <location>
        <position position="175"/>
    </location>
</feature>
<name>CAPSD_WHV5</name>
<accession>P69711</accession>
<accession>P03152</accession>
<gene>
    <name evidence="1" type="primary">C</name>
</gene>